<protein>
    <recommendedName>
        <fullName evidence="11">Patulin biosynthesis cluster protein F</fullName>
        <ecNumber evidence="10">1.-.-.-</ecNumber>
    </recommendedName>
</protein>
<organism>
    <name type="scientific">Penicillium expansum</name>
    <name type="common">Blue mold rot fungus</name>
    <dbReference type="NCBI Taxonomy" id="27334"/>
    <lineage>
        <taxon>Eukaryota</taxon>
        <taxon>Fungi</taxon>
        <taxon>Dikarya</taxon>
        <taxon>Ascomycota</taxon>
        <taxon>Pezizomycotina</taxon>
        <taxon>Eurotiomycetes</taxon>
        <taxon>Eurotiomycetidae</taxon>
        <taxon>Eurotiales</taxon>
        <taxon>Aspergillaceae</taxon>
        <taxon>Penicillium</taxon>
    </lineage>
</organism>
<name>PATF_PENEN</name>
<dbReference type="EC" id="1.-.-.-" evidence="10"/>
<dbReference type="EMBL" id="KF899892">
    <property type="protein sequence ID" value="AIG62137.1"/>
    <property type="molecule type" value="Genomic_DNA"/>
</dbReference>
<dbReference type="EMBL" id="JQFZ01000262">
    <property type="protein sequence ID" value="KGO52629.1"/>
    <property type="molecule type" value="Genomic_DNA"/>
</dbReference>
<dbReference type="RefSeq" id="XP_016595359.1">
    <property type="nucleotide sequence ID" value="XM_016745546.1"/>
</dbReference>
<dbReference type="SMR" id="A0A075TR27"/>
<dbReference type="STRING" id="27334.A0A075TR27"/>
<dbReference type="GlyCosmos" id="A0A075TR27">
    <property type="glycosylation" value="2 sites, No reported glycans"/>
</dbReference>
<dbReference type="GeneID" id="27680966"/>
<dbReference type="VEuPathDB" id="FungiDB:PEXP_094340"/>
<dbReference type="HOGENOM" id="CLU_119119_0_0_1"/>
<dbReference type="OrthoDB" id="3814701at2759"/>
<dbReference type="PhylomeDB" id="A0A075TR27"/>
<dbReference type="BioCyc" id="MetaCyc:MONOMER-18633"/>
<dbReference type="UniPathway" id="UPA00918"/>
<dbReference type="Proteomes" id="UP000030143">
    <property type="component" value="Unassembled WGS sequence"/>
</dbReference>
<dbReference type="GO" id="GO:0005829">
    <property type="term" value="C:cytosol"/>
    <property type="evidence" value="ECO:0000314"/>
    <property type="project" value="GO_Central"/>
</dbReference>
<dbReference type="GO" id="GO:0016491">
    <property type="term" value="F:oxidoreductase activity"/>
    <property type="evidence" value="ECO:0000314"/>
    <property type="project" value="GO_Central"/>
</dbReference>
<dbReference type="GO" id="GO:0016218">
    <property type="term" value="F:polyketide synthase activity"/>
    <property type="evidence" value="ECO:0000314"/>
    <property type="project" value="UniProt"/>
</dbReference>
<dbReference type="GO" id="GO:0140723">
    <property type="term" value="P:patulin biosynthetic process"/>
    <property type="evidence" value="ECO:0000314"/>
    <property type="project" value="GO_Central"/>
</dbReference>
<dbReference type="Gene3D" id="3.10.450.50">
    <property type="match status" value="1"/>
</dbReference>
<dbReference type="InterPro" id="IPR032710">
    <property type="entry name" value="NTF2-like_dom_sf"/>
</dbReference>
<dbReference type="SUPFAM" id="SSF54427">
    <property type="entry name" value="NTF2-like"/>
    <property type="match status" value="1"/>
</dbReference>
<accession>A0A075TR27</accession>
<comment type="function">
    <text evidence="6 9 10 13">Part of the gene cluster that mediates the biosynthesis of patulin, an acetate-derived tetraketide mycotoxin produced by several fungal species that shows antimicrobial properties against several bacteria (PubMed:25625822, PubMed:30100914, PubMed:30680886). PatF catalyzes the conversion of phyllostine into neopatulin (PubMed:30680886). The pathway begins with the synthesis of 6-methylsalicylic acid by the polyketide synthase (PKS) patK via condensation of acetate and malonate units. The 6-methylsalicylic acid decarboxylase patG then catalyzes the decarboxylation of 6-methylsalicylic acid to yield m-cresol (also known as 3-methylphenol). These first reactions occur in the cytosol. The intermediate m-cresol is then transported into the endoplasmic reticulum where the cytochrome P450 monooxygenase patH converts it to m-hydroxybenzyl alcohol, which is further converted to gentisyl alcohol by the cytochrome P450 monooxygenase patI. The oxidoreductases patJ and patO further convert gentisyl alcohol to isoepoxydon in the vacuole. PatN catalyzes then the transformation of isoepoxydon into phyllostine. The cluster protein patF is responsible for the conversion from phyllostine to neopatulin whereas the alcohol dehydrogenase patD converts neopatulin to E-ascladiol. The steps between isoepoxydon and E-ascladiol occur in the cytosol, and E-ascladiol is probably secreted to the extracellular space by one of the cluster-specific transporters patC or patM. Finally, the secreted patulin synthase patE catalyzes the conversion of E-ascladiol to patulin (Probable) (PubMed:30680886).</text>
</comment>
<comment type="catalytic activity">
    <reaction evidence="10">
        <text>phyllostine = neopatulin</text>
        <dbReference type="Rhea" id="RHEA:62220"/>
        <dbReference type="ChEBI" id="CHEBI:145110"/>
        <dbReference type="ChEBI" id="CHEBI:145111"/>
    </reaction>
    <physiologicalReaction direction="left-to-right" evidence="10">
        <dbReference type="Rhea" id="RHEA:62221"/>
    </physiologicalReaction>
</comment>
<comment type="pathway">
    <text evidence="10">Mycotoxin biosynthesis; patulin biosynthesis.</text>
</comment>
<comment type="subcellular location">
    <subcellularLocation>
        <location evidence="10">Cytoplasm</location>
        <location evidence="10">Cytosol</location>
    </subcellularLocation>
</comment>
<comment type="induction">
    <text evidence="5 6 8 9 10">Expression is correlated with the production of patulin (PubMed:25120234). Expression is positively regulated by the secondary metabolism regulator laeA (PubMed:27528575, PubMed:30100914). Expression is strongly decreased with increased sucrose concentrations. This decrease is lost in the presence of malic acid (PubMed:30100914). Expression is increased with pH changes from 2.5 to 3.5 in the presence of a limiting concentration of sucrose, 50 mM (PubMed:30100914). Natural phenols present in apple fruits such as chlorogenic acid or the flavonoid epicatechin modulate patulin biosynthesis. They increase expression in the absence of sucrose, have little impact in the presence of 15 mM sucrose, and decrease expression in 175 mM sucrose (PubMed:30100914). Expression is positively regulated by the patulin cluster-specific transcription factor patL (PubMed:25625822). Finally, expression is also positively regulated by the velvet family proteins transcription regulators veA, velB, velC, but not vosA (PubMed:30680886).</text>
</comment>
<comment type="disruption phenotype">
    <text evidence="10">Completely abolishes the production of patulin, shows reduced sporulation, and leads to the production of a distinct dark-red pigment.</text>
</comment>
<comment type="biotechnology">
    <text evidence="3 4 7">Patulin was originally used as an antibiotic and specifically trialed to be used against the common cold, but it is no longer used for that purpose since it has been shown to induce immunological, neurological and gastrointestinal effects (PubMed:15082620). Genotoxic effects of patulin with dose-dependent increase in DNA strand breaks in brain, liver and kidneys have been detected in mice (PubMed:22222931). However, more recently, it has been proposed that patulin might also have anti-tumor properties (PubMed:26619846).</text>
</comment>
<comment type="similarity">
    <text evidence="12">Belongs to the patF family.</text>
</comment>
<reference key="1">
    <citation type="journal article" date="2014" name="Int. J. Food Microbiol.">
        <title>Sequencing, physical organization and kinetic expression of the patulin biosynthetic gene cluster from Penicillium expansum.</title>
        <authorList>
            <person name="Tannous J."/>
            <person name="El Khoury R."/>
            <person name="Snini S.P."/>
            <person name="Lippi Y."/>
            <person name="El Khoury A."/>
            <person name="Atoui A."/>
            <person name="Lteif R."/>
            <person name="Oswald I.P."/>
            <person name="Puel O."/>
        </authorList>
    </citation>
    <scope>NUCLEOTIDE SEQUENCE [GENOMIC DNA]</scope>
    <scope>IDENTIFICATION</scope>
    <scope>INDUCTION</scope>
    <source>
        <strain>NRRL 35695</strain>
    </source>
</reference>
<reference key="2">
    <citation type="journal article" date="2015" name="Mol. Plant Microbe Interact.">
        <title>Genome, transcriptome, and functional analyses of Penicillium expansum provide new insights into secondary metabolism and pathogenicity.</title>
        <authorList>
            <person name="Ballester A.R."/>
            <person name="Marcet-Houben M."/>
            <person name="Levin E."/>
            <person name="Sela N."/>
            <person name="Selma-Lazaro C."/>
            <person name="Carmona L."/>
            <person name="Wisniewski M."/>
            <person name="Droby S."/>
            <person name="Gonzalez-Candelas L."/>
            <person name="Gabaldon T."/>
        </authorList>
    </citation>
    <scope>NUCLEOTIDE SEQUENCE [LARGE SCALE GENOMIC DNA]</scope>
    <source>
        <strain>MD-8</strain>
    </source>
</reference>
<reference key="3">
    <citation type="journal article" date="2004" name="Int. J. Epidemiol.">
        <title>Clinical trial of patulin in the common cold. 1944.</title>
        <authorList>
            <consortium name="Patulin Clinical Trials Committee, Medical Research Council"/>
        </authorList>
    </citation>
    <scope>BIOTECHNOLOGY</scope>
</reference>
<reference key="4">
    <citation type="journal article" date="2012" name="Food Chem. Toxicol.">
        <title>DNA damage in organs of mice treated acutely with patulin, a known mycotoxin.</title>
        <authorList>
            <person name="de Melo F.T."/>
            <person name="de Oliveira I.M."/>
            <person name="Greggio S."/>
            <person name="Dacosta J.C."/>
            <person name="Guecheva T.N."/>
            <person name="Saffi J."/>
            <person name="Henriques J.A."/>
            <person name="Rosa R.M."/>
        </authorList>
    </citation>
    <scope>BIOTECHNOLOGY</scope>
</reference>
<reference key="5">
    <citation type="journal article" date="2016" name="Tumor Biol.">
        <title>The potential effect of patulin on mice bearing melanoma cells: an anti-tumour or carcinogenic effect?</title>
        <authorList>
            <person name="Boussabbeh M."/>
            <person name="Ben Salem I."/>
            <person name="Rjiba-Touati K."/>
            <person name="Bouyahya C."/>
            <person name="Neffati F."/>
            <person name="Najjar M.F."/>
            <person name="Bacha H."/>
            <person name="Abid-Essefi S."/>
        </authorList>
    </citation>
    <scope>BIOTECHNOLOGY</scope>
</reference>
<reference key="6">
    <citation type="journal article" date="2017" name="Mol. Plant Pathol.">
        <title>LaeA regulation of secondary metabolism modulates virulence in Penicillium expansum and is mediated by sucrose.</title>
        <authorList>
            <person name="Kumar D."/>
            <person name="Barad S."/>
            <person name="Chen Y."/>
            <person name="Luo X."/>
            <person name="Tannous J."/>
            <person name="Dubey A."/>
            <person name="Glam Matana N."/>
            <person name="Tian S."/>
            <person name="Li B."/>
            <person name="Keller N."/>
            <person name="Prusky D."/>
        </authorList>
    </citation>
    <scope>INDUCTION</scope>
</reference>
<reference key="7">
    <citation type="journal article" date="2018" name="Front. Plant Sci.">
        <title>Apple intrinsic factors modulating the global regulator, LaeA, the patulin gene cluster and patulin accumulation during fruit colonization by Penicillium expansum.</title>
        <authorList>
            <person name="Kumar D."/>
            <person name="Tannous J."/>
            <person name="Sionov E."/>
            <person name="Keller N."/>
            <person name="Prusky D."/>
        </authorList>
    </citation>
    <scope>FUNCTION</scope>
    <scope>INDUCTION</scope>
</reference>
<reference key="8">
    <citation type="journal article" date="2015" name="Mol. Plant Microbe Interact.">
        <title>Genomic characterization reveals insights into patulin biosynthesis and pathogenicity in Penicillium species.</title>
        <authorList>
            <person name="Li B."/>
            <person name="Zong Y."/>
            <person name="Du Z."/>
            <person name="Chen Y."/>
            <person name="Zhang Z."/>
            <person name="Qin G."/>
            <person name="Zhao W."/>
            <person name="Tian S."/>
        </authorList>
    </citation>
    <scope>FUNCTION</scope>
    <scope>INDUCTION</scope>
</reference>
<reference key="9">
    <citation type="journal article" date="2019" name="Environ. Microbiol.">
        <title>Dissection of patulin biosynthesis, spatial control and regulation mechanism in Penicillium expansum.</title>
        <authorList>
            <person name="Li B."/>
            <person name="Chen Y."/>
            <person name="Zong Y."/>
            <person name="Shang Y."/>
            <person name="Zhang Z."/>
            <person name="Xu X."/>
            <person name="Wang X."/>
            <person name="Long M."/>
            <person name="Tian S."/>
        </authorList>
    </citation>
    <scope>FUNCTION</scope>
    <scope>DISRUPTION PHENOTYPE</scope>
    <scope>SUBCELLULAR LOCATION</scope>
    <scope>CATALYTIC ACTIVITY</scope>
    <scope>INDUCTION</scope>
    <scope>PATHWAY</scope>
</reference>
<feature type="signal peptide" evidence="1">
    <location>
        <begin position="1"/>
        <end position="21"/>
    </location>
</feature>
<feature type="chain" id="PRO_5007956277" description="Patulin biosynthesis cluster protein F" evidence="1">
    <location>
        <begin position="22"/>
        <end position="199"/>
    </location>
</feature>
<feature type="glycosylation site" description="N-linked (GlcNAc...) asparagine" evidence="2">
    <location>
        <position position="129"/>
    </location>
</feature>
<feature type="glycosylation site" description="N-linked (GlcNAc...) asparagine" evidence="2">
    <location>
        <position position="183"/>
    </location>
</feature>
<gene>
    <name evidence="11" type="primary">patF</name>
    <name type="ORF">PEX2_082760</name>
</gene>
<evidence type="ECO:0000255" key="1"/>
<evidence type="ECO:0000255" key="2">
    <source>
        <dbReference type="PROSITE-ProRule" id="PRU00498"/>
    </source>
</evidence>
<evidence type="ECO:0000269" key="3">
    <source>
    </source>
</evidence>
<evidence type="ECO:0000269" key="4">
    <source>
    </source>
</evidence>
<evidence type="ECO:0000269" key="5">
    <source>
    </source>
</evidence>
<evidence type="ECO:0000269" key="6">
    <source>
    </source>
</evidence>
<evidence type="ECO:0000269" key="7">
    <source>
    </source>
</evidence>
<evidence type="ECO:0000269" key="8">
    <source>
    </source>
</evidence>
<evidence type="ECO:0000269" key="9">
    <source>
    </source>
</evidence>
<evidence type="ECO:0000269" key="10">
    <source>
    </source>
</evidence>
<evidence type="ECO:0000303" key="11">
    <source>
    </source>
</evidence>
<evidence type="ECO:0000305" key="12"/>
<evidence type="ECO:0000305" key="13">
    <source>
    </source>
</evidence>
<proteinExistence type="evidence at protein level"/>
<sequence length="199" mass="21738">MKSSLWVSLAVSLIGLGPAAARNDYPGNYPSSSPPLGPTDWERTPVSVFAKVLNTQPDPDYNLLKELVTYDCTYISLTFDNPTLHGIMPWAGTHTHVGPQAFIDIFTRVGLYWDRGPFSIDHIFGDDGNVTAWGSFTATSRTLGKTVISPWAARARVNSANQIFEFQWMEDTFTTASSFGSDNSTKVFIANPEGGTAHA</sequence>
<keyword id="KW-0963">Cytoplasm</keyword>
<keyword id="KW-0325">Glycoprotein</keyword>
<keyword id="KW-0560">Oxidoreductase</keyword>
<keyword id="KW-1185">Reference proteome</keyword>
<keyword id="KW-0732">Signal</keyword>